<dbReference type="EC" id="2.7.7.6" evidence="1"/>
<dbReference type="EMBL" id="BA000023">
    <property type="protein sequence ID" value="BAK54219.1"/>
    <property type="molecule type" value="Genomic_DNA"/>
</dbReference>
<dbReference type="RefSeq" id="WP_052846238.1">
    <property type="nucleotide sequence ID" value="NC_003106.2"/>
</dbReference>
<dbReference type="SMR" id="Q976A3"/>
<dbReference type="STRING" id="273063.STK_02775"/>
<dbReference type="KEGG" id="sto:STK_02775"/>
<dbReference type="PATRIC" id="fig|273063.9.peg.329"/>
<dbReference type="eggNOG" id="arCOG04258">
    <property type="taxonomic scope" value="Archaea"/>
</dbReference>
<dbReference type="OrthoDB" id="30537at2157"/>
<dbReference type="Proteomes" id="UP000001015">
    <property type="component" value="Chromosome"/>
</dbReference>
<dbReference type="GO" id="GO:0005737">
    <property type="term" value="C:cytoplasm"/>
    <property type="evidence" value="ECO:0007669"/>
    <property type="project" value="UniProtKB-SubCell"/>
</dbReference>
<dbReference type="GO" id="GO:0000428">
    <property type="term" value="C:DNA-directed RNA polymerase complex"/>
    <property type="evidence" value="ECO:0007669"/>
    <property type="project" value="UniProtKB-KW"/>
</dbReference>
<dbReference type="GO" id="GO:0003677">
    <property type="term" value="F:DNA binding"/>
    <property type="evidence" value="ECO:0007669"/>
    <property type="project" value="InterPro"/>
</dbReference>
<dbReference type="GO" id="GO:0003899">
    <property type="term" value="F:DNA-directed RNA polymerase activity"/>
    <property type="evidence" value="ECO:0007669"/>
    <property type="project" value="UniProtKB-UniRule"/>
</dbReference>
<dbReference type="GO" id="GO:0006366">
    <property type="term" value="P:transcription by RNA polymerase II"/>
    <property type="evidence" value="ECO:0007669"/>
    <property type="project" value="TreeGrafter"/>
</dbReference>
<dbReference type="GO" id="GO:0006362">
    <property type="term" value="P:transcription elongation by RNA polymerase I"/>
    <property type="evidence" value="ECO:0007669"/>
    <property type="project" value="TreeGrafter"/>
</dbReference>
<dbReference type="GO" id="GO:0042797">
    <property type="term" value="P:tRNA transcription by RNA polymerase III"/>
    <property type="evidence" value="ECO:0007669"/>
    <property type="project" value="TreeGrafter"/>
</dbReference>
<dbReference type="Gene3D" id="3.90.940.20">
    <property type="entry name" value="RPB5-like RNA polymerase subunit"/>
    <property type="match status" value="1"/>
</dbReference>
<dbReference type="HAMAP" id="MF_00025">
    <property type="entry name" value="RNApol_Rpo5_RPB5"/>
    <property type="match status" value="1"/>
</dbReference>
<dbReference type="InterPro" id="IPR014381">
    <property type="entry name" value="Arch_Rpo5/euc_Rpb5"/>
</dbReference>
<dbReference type="InterPro" id="IPR000783">
    <property type="entry name" value="RNA_pol_subH/Rpb5_C"/>
</dbReference>
<dbReference type="InterPro" id="IPR020608">
    <property type="entry name" value="RNA_pol_subH/Rpb5_CS"/>
</dbReference>
<dbReference type="InterPro" id="IPR035913">
    <property type="entry name" value="RPB5-like_sf"/>
</dbReference>
<dbReference type="NCBIfam" id="NF007129">
    <property type="entry name" value="PRK09570.1"/>
    <property type="match status" value="1"/>
</dbReference>
<dbReference type="PANTHER" id="PTHR10535">
    <property type="entry name" value="DNA-DIRECTED RNA POLYMERASES I, II, AND III SUBUNIT RPABC1"/>
    <property type="match status" value="1"/>
</dbReference>
<dbReference type="PANTHER" id="PTHR10535:SF0">
    <property type="entry name" value="DNA-DIRECTED RNA POLYMERASES I, II, AND III SUBUNIT RPABC1"/>
    <property type="match status" value="1"/>
</dbReference>
<dbReference type="Pfam" id="PF01191">
    <property type="entry name" value="RNA_pol_Rpb5_C"/>
    <property type="match status" value="1"/>
</dbReference>
<dbReference type="SUPFAM" id="SSF55287">
    <property type="entry name" value="RPB5-like RNA polymerase subunit"/>
    <property type="match status" value="1"/>
</dbReference>
<dbReference type="PROSITE" id="PS01110">
    <property type="entry name" value="RNA_POL_H_23KD"/>
    <property type="match status" value="1"/>
</dbReference>
<organism>
    <name type="scientific">Sulfurisphaera tokodaii (strain DSM 16993 / JCM 10545 / NBRC 100140 / 7)</name>
    <name type="common">Sulfolobus tokodaii</name>
    <dbReference type="NCBI Taxonomy" id="273063"/>
    <lineage>
        <taxon>Archaea</taxon>
        <taxon>Thermoproteota</taxon>
        <taxon>Thermoprotei</taxon>
        <taxon>Sulfolobales</taxon>
        <taxon>Sulfolobaceae</taxon>
        <taxon>Sulfurisphaera</taxon>
    </lineage>
</organism>
<proteinExistence type="inferred from homology"/>
<reference key="1">
    <citation type="journal article" date="2001" name="DNA Res.">
        <title>Complete genome sequence of an aerobic thermoacidophilic Crenarchaeon, Sulfolobus tokodaii strain7.</title>
        <authorList>
            <person name="Kawarabayasi Y."/>
            <person name="Hino Y."/>
            <person name="Horikawa H."/>
            <person name="Jin-no K."/>
            <person name="Takahashi M."/>
            <person name="Sekine M."/>
            <person name="Baba S."/>
            <person name="Ankai A."/>
            <person name="Kosugi H."/>
            <person name="Hosoyama A."/>
            <person name="Fukui S."/>
            <person name="Nagai Y."/>
            <person name="Nishijima K."/>
            <person name="Otsuka R."/>
            <person name="Nakazawa H."/>
            <person name="Takamiya M."/>
            <person name="Kato Y."/>
            <person name="Yoshizawa T."/>
            <person name="Tanaka T."/>
            <person name="Kudoh Y."/>
            <person name="Yamazaki J."/>
            <person name="Kushida N."/>
            <person name="Oguchi A."/>
            <person name="Aoki K."/>
            <person name="Masuda S."/>
            <person name="Yanagii M."/>
            <person name="Nishimura M."/>
            <person name="Yamagishi A."/>
            <person name="Oshima T."/>
            <person name="Kikuchi H."/>
        </authorList>
    </citation>
    <scope>NUCLEOTIDE SEQUENCE [LARGE SCALE GENOMIC DNA]</scope>
    <source>
        <strain>DSM 16993 / JCM 10545 / NBRC 100140 / 7</strain>
    </source>
</reference>
<comment type="function">
    <text evidence="1">DNA-dependent RNA polymerase (RNAP) catalyzes the transcription of DNA into RNA using the four ribonucleoside triphosphates as substrates.</text>
</comment>
<comment type="catalytic activity">
    <reaction evidence="1">
        <text>RNA(n) + a ribonucleoside 5'-triphosphate = RNA(n+1) + diphosphate</text>
        <dbReference type="Rhea" id="RHEA:21248"/>
        <dbReference type="Rhea" id="RHEA-COMP:14527"/>
        <dbReference type="Rhea" id="RHEA-COMP:17342"/>
        <dbReference type="ChEBI" id="CHEBI:33019"/>
        <dbReference type="ChEBI" id="CHEBI:61557"/>
        <dbReference type="ChEBI" id="CHEBI:140395"/>
        <dbReference type="EC" id="2.7.7.6"/>
    </reaction>
</comment>
<comment type="subunit">
    <text evidence="1">Part of the RNA polymerase complex.</text>
</comment>
<comment type="subcellular location">
    <subcellularLocation>
        <location evidence="1">Cytoplasm</location>
    </subcellularLocation>
</comment>
<comment type="similarity">
    <text evidence="1">Belongs to the archaeal Rpo5/eukaryotic RPB5 RNA polymerase subunit family.</text>
</comment>
<sequence length="84" mass="9366">MRSSSKIKIDPSQHELVPKHEVLSIEEAYKILKELGIKPEQLPWIRASDPIAKLVGAKPGDIIKITRKSSLSGEVVVYRYVISG</sequence>
<keyword id="KW-0963">Cytoplasm</keyword>
<keyword id="KW-0240">DNA-directed RNA polymerase</keyword>
<keyword id="KW-0548">Nucleotidyltransferase</keyword>
<keyword id="KW-1185">Reference proteome</keyword>
<keyword id="KW-0804">Transcription</keyword>
<keyword id="KW-0808">Transferase</keyword>
<gene>
    <name evidence="1" type="primary">rpo5</name>
    <name evidence="1" type="synonym">rpoH</name>
    <name type="ordered locus">STK_02775</name>
    <name type="ORF">STS038</name>
</gene>
<accession>Q976A3</accession>
<accession>F9VMS3</accession>
<evidence type="ECO:0000255" key="1">
    <source>
        <dbReference type="HAMAP-Rule" id="MF_00025"/>
    </source>
</evidence>
<feature type="chain" id="PRO_0000146105" description="DNA-directed RNA polymerase subunit Rpo5">
    <location>
        <begin position="1"/>
        <end position="84"/>
    </location>
</feature>
<protein>
    <recommendedName>
        <fullName evidence="1">DNA-directed RNA polymerase subunit Rpo5</fullName>
        <ecNumber evidence="1">2.7.7.6</ecNumber>
    </recommendedName>
    <alternativeName>
        <fullName evidence="1">DNA-directed RNA polymerase subunit H</fullName>
    </alternativeName>
</protein>
<name>RPO5_SULTO</name>